<name>PGK_AGABI</name>
<comment type="function">
    <text evidence="2 3 4">Catalyzes one of the two ATP producing reactions in the glycolytic pathway via the reversible conversion of 1,3-diphosphoglycerate to 3-phosphoglycerate (By similarity). Both L- and D- forms of purine and pyrimidine nucleotides can be used as substrates, but the activity is much lower on pyrimidines (By similarity). Negatively regulates the biosynthesis of acetyl-CoA from pyruvate in the mitochondrion (By similarity).</text>
</comment>
<comment type="catalytic activity">
    <reaction evidence="4">
        <text>(2R)-3-phosphoglycerate + ATP = (2R)-3-phospho-glyceroyl phosphate + ADP</text>
        <dbReference type="Rhea" id="RHEA:14801"/>
        <dbReference type="ChEBI" id="CHEBI:30616"/>
        <dbReference type="ChEBI" id="CHEBI:57604"/>
        <dbReference type="ChEBI" id="CHEBI:58272"/>
        <dbReference type="ChEBI" id="CHEBI:456216"/>
        <dbReference type="EC" id="2.7.2.3"/>
    </reaction>
</comment>
<comment type="cofactor">
    <cofactor evidence="3">
        <name>Mg(2+)</name>
        <dbReference type="ChEBI" id="CHEBI:18420"/>
    </cofactor>
</comment>
<comment type="pathway">
    <text evidence="4">Carbohydrate degradation; glycolysis; pyruvate from D-glyceraldehyde 3-phosphate: step 2/5.</text>
</comment>
<comment type="subunit">
    <text evidence="1">Monomer.</text>
</comment>
<comment type="subcellular location">
    <subcellularLocation>
        <location evidence="4">Cytoplasm</location>
    </subcellularLocation>
    <subcellularLocation>
        <location evidence="4">Mitochondrion</location>
    </subcellularLocation>
</comment>
<comment type="similarity">
    <text evidence="6">Belongs to the phosphoglycerate kinase family.</text>
</comment>
<accession>O94123</accession>
<reference key="1">
    <citation type="submission" date="1996-04" db="EMBL/GenBank/DDBJ databases">
        <title>Sequence of the Agaricus bisporus pgkA gene.</title>
        <authorList>
            <person name="Schaap P.J."/>
            <person name="Mueller Y."/>
            <person name="van Griensven L.J.L.D."/>
            <person name="Visser J."/>
        </authorList>
    </citation>
    <scope>NUCLEOTIDE SEQUENCE [GENOMIC DNA]</scope>
    <source>
        <strain>Horst H39</strain>
    </source>
</reference>
<reference key="2">
    <citation type="journal article" date="1998" name="Mycol. Res.">
        <title>Biochemical and molecular aspects of growth on fruiting of the edible mushroom Agaricus bisporus.</title>
        <authorList>
            <person name="De Groot P.W.J."/>
            <person name="Visser J."/>
            <person name="van Griensven L.J.L.D."/>
            <person name="Schaap P.J."/>
        </authorList>
        <dbReference type="AGRICOLA" id="IND21972038"/>
    </citation>
    <scope>NUCLEOTIDE SEQUENCE [MRNA]</scope>
    <source>
        <strain>Horst U1</strain>
    </source>
</reference>
<keyword id="KW-0067">ATP-binding</keyword>
<keyword id="KW-0963">Cytoplasm</keyword>
<keyword id="KW-0324">Glycolysis</keyword>
<keyword id="KW-0418">Kinase</keyword>
<keyword id="KW-0460">Magnesium</keyword>
<keyword id="KW-0479">Metal-binding</keyword>
<keyword id="KW-0496">Mitochondrion</keyword>
<keyword id="KW-0547">Nucleotide-binding</keyword>
<keyword id="KW-0808">Transferase</keyword>
<gene>
    <name type="primary">pgkA</name>
    <name type="synonym">pgk</name>
</gene>
<sequence length="416" mass="44719">MSLSNKLSITDLALTGKRVLIRVDFNSPIQDGKITNPARINAALPTIKYALDNGASKVILMSHLGRPDGKAISKYSLKPVASELEKLLKKPVFFLHDCVGPDIEKAVLEAPEGAVVLLENLRFHIEEEGSAKNEEGKKIKADPSKVTQFREQLTRLGDVYVNDAFGTAHRAHSSMVGIKLPRRASGFLVKKELDYFAKALENPERPFLAILGGAKVSDKIQLIENMLDKVNCLVIGGGMAFTFKKTMQNVAIGNSLFDKPGSEKVAGIVEKAKKNNVEIVFPVDYVVGDKFDANANHKIVTDDEGVPDGWMGLDVGPKSNELFREAVLKAKTILWNGPPGVFEFPAFAKGSKVLLDATVEAVQKGATVIVGGGDTATVVANHDAEEKLSHVSTGGGASLELLEGKTLPGVAELSNK</sequence>
<protein>
    <recommendedName>
        <fullName>Phosphoglycerate kinase</fullName>
        <ecNumber evidence="4">2.7.2.3</ecNumber>
    </recommendedName>
</protein>
<dbReference type="EC" id="2.7.2.3" evidence="4"/>
<dbReference type="EMBL" id="X97580">
    <property type="protein sequence ID" value="CAA66195.1"/>
    <property type="molecule type" value="Genomic_DNA"/>
</dbReference>
<dbReference type="EMBL" id="X91105">
    <property type="protein sequence ID" value="CAA62559.1"/>
    <property type="molecule type" value="mRNA"/>
</dbReference>
<dbReference type="SMR" id="O94123"/>
<dbReference type="UniPathway" id="UPA00109">
    <property type="reaction ID" value="UER00185"/>
</dbReference>
<dbReference type="GO" id="GO:0005829">
    <property type="term" value="C:cytosol"/>
    <property type="evidence" value="ECO:0007669"/>
    <property type="project" value="TreeGrafter"/>
</dbReference>
<dbReference type="GO" id="GO:0005739">
    <property type="term" value="C:mitochondrion"/>
    <property type="evidence" value="ECO:0007669"/>
    <property type="project" value="UniProtKB-SubCell"/>
</dbReference>
<dbReference type="GO" id="GO:0043531">
    <property type="term" value="F:ADP binding"/>
    <property type="evidence" value="ECO:0007669"/>
    <property type="project" value="TreeGrafter"/>
</dbReference>
<dbReference type="GO" id="GO:0005524">
    <property type="term" value="F:ATP binding"/>
    <property type="evidence" value="ECO:0007669"/>
    <property type="project" value="UniProtKB-KW"/>
</dbReference>
<dbReference type="GO" id="GO:0046872">
    <property type="term" value="F:metal ion binding"/>
    <property type="evidence" value="ECO:0007669"/>
    <property type="project" value="UniProtKB-KW"/>
</dbReference>
<dbReference type="GO" id="GO:0004618">
    <property type="term" value="F:phosphoglycerate kinase activity"/>
    <property type="evidence" value="ECO:0007669"/>
    <property type="project" value="UniProtKB-EC"/>
</dbReference>
<dbReference type="GO" id="GO:0006094">
    <property type="term" value="P:gluconeogenesis"/>
    <property type="evidence" value="ECO:0007669"/>
    <property type="project" value="TreeGrafter"/>
</dbReference>
<dbReference type="GO" id="GO:0006096">
    <property type="term" value="P:glycolytic process"/>
    <property type="evidence" value="ECO:0007669"/>
    <property type="project" value="UniProtKB-UniPathway"/>
</dbReference>
<dbReference type="CDD" id="cd00318">
    <property type="entry name" value="Phosphoglycerate_kinase"/>
    <property type="match status" value="1"/>
</dbReference>
<dbReference type="FunFam" id="3.40.50.1260:FF:000003">
    <property type="entry name" value="Phosphoglycerate kinase"/>
    <property type="match status" value="1"/>
</dbReference>
<dbReference type="FunFam" id="3.40.50.1260:FF:000019">
    <property type="entry name" value="Phosphoglycerate kinase 1"/>
    <property type="match status" value="1"/>
</dbReference>
<dbReference type="Gene3D" id="3.40.50.1260">
    <property type="entry name" value="Phosphoglycerate kinase, N-terminal domain"/>
    <property type="match status" value="3"/>
</dbReference>
<dbReference type="HAMAP" id="MF_00145">
    <property type="entry name" value="Phosphoglyc_kinase"/>
    <property type="match status" value="1"/>
</dbReference>
<dbReference type="InterPro" id="IPR001576">
    <property type="entry name" value="Phosphoglycerate_kinase"/>
</dbReference>
<dbReference type="InterPro" id="IPR015911">
    <property type="entry name" value="Phosphoglycerate_kinase_CS"/>
</dbReference>
<dbReference type="InterPro" id="IPR015824">
    <property type="entry name" value="Phosphoglycerate_kinase_N"/>
</dbReference>
<dbReference type="InterPro" id="IPR036043">
    <property type="entry name" value="Phosphoglycerate_kinase_sf"/>
</dbReference>
<dbReference type="PANTHER" id="PTHR11406">
    <property type="entry name" value="PHOSPHOGLYCERATE KINASE"/>
    <property type="match status" value="1"/>
</dbReference>
<dbReference type="PANTHER" id="PTHR11406:SF0">
    <property type="entry name" value="PHOSPHOGLYCERATE KINASE"/>
    <property type="match status" value="1"/>
</dbReference>
<dbReference type="Pfam" id="PF00162">
    <property type="entry name" value="PGK"/>
    <property type="match status" value="1"/>
</dbReference>
<dbReference type="PIRSF" id="PIRSF000724">
    <property type="entry name" value="Pgk"/>
    <property type="match status" value="1"/>
</dbReference>
<dbReference type="PRINTS" id="PR00477">
    <property type="entry name" value="PHGLYCKINASE"/>
</dbReference>
<dbReference type="SUPFAM" id="SSF53748">
    <property type="entry name" value="Phosphoglycerate kinase"/>
    <property type="match status" value="1"/>
</dbReference>
<dbReference type="PROSITE" id="PS00111">
    <property type="entry name" value="PGLYCERATE_KINASE"/>
    <property type="match status" value="1"/>
</dbReference>
<feature type="chain" id="PRO_0000145873" description="Phosphoglycerate kinase">
    <location>
        <begin position="1"/>
        <end position="416"/>
    </location>
</feature>
<feature type="binding site" evidence="3">
    <location>
        <position position="23"/>
    </location>
    <ligand>
        <name>(2R)-3-phosphoglycerate</name>
        <dbReference type="ChEBI" id="CHEBI:58272"/>
    </ligand>
</feature>
<feature type="binding site" evidence="5">
    <location>
        <position position="24"/>
    </location>
    <ligand>
        <name>(2R)-3-phosphoglycerate</name>
        <dbReference type="ChEBI" id="CHEBI:58272"/>
    </ligand>
</feature>
<feature type="binding site" evidence="3">
    <location>
        <position position="25"/>
    </location>
    <ligand>
        <name>(2R)-3-phosphoglycerate</name>
        <dbReference type="ChEBI" id="CHEBI:58272"/>
    </ligand>
</feature>
<feature type="binding site" evidence="5">
    <location>
        <position position="26"/>
    </location>
    <ligand>
        <name>(2R)-3-phosphoglycerate</name>
        <dbReference type="ChEBI" id="CHEBI:58272"/>
    </ligand>
</feature>
<feature type="binding site" evidence="5">
    <location>
        <position position="39"/>
    </location>
    <ligand>
        <name>(2R)-3-phosphoglycerate</name>
        <dbReference type="ChEBI" id="CHEBI:58272"/>
    </ligand>
</feature>
<feature type="binding site" evidence="3">
    <location>
        <position position="62"/>
    </location>
    <ligand>
        <name>(2R)-3-phosphoglycerate</name>
        <dbReference type="ChEBI" id="CHEBI:58272"/>
    </ligand>
</feature>
<feature type="binding site" evidence="5">
    <location>
        <position position="63"/>
    </location>
    <ligand>
        <name>(2R)-3-phosphoglycerate</name>
        <dbReference type="ChEBI" id="CHEBI:58272"/>
    </ligand>
</feature>
<feature type="binding site" evidence="3">
    <location>
        <position position="65"/>
    </location>
    <ligand>
        <name>(2R)-3-phosphoglycerate</name>
        <dbReference type="ChEBI" id="CHEBI:58272"/>
    </ligand>
</feature>
<feature type="binding site" evidence="5">
    <location>
        <position position="66"/>
    </location>
    <ligand>
        <name>(2R)-3-phosphoglycerate</name>
        <dbReference type="ChEBI" id="CHEBI:58272"/>
    </ligand>
</feature>
<feature type="binding site" evidence="3">
    <location>
        <position position="121"/>
    </location>
    <ligand>
        <name>(2R)-3-phosphoglycerate</name>
        <dbReference type="ChEBI" id="CHEBI:58272"/>
    </ligand>
</feature>
<feature type="binding site" evidence="5">
    <location>
        <position position="122"/>
    </location>
    <ligand>
        <name>(2R)-3-phosphoglycerate</name>
        <dbReference type="ChEBI" id="CHEBI:58272"/>
    </ligand>
</feature>
<feature type="binding site" evidence="3">
    <location>
        <position position="169"/>
    </location>
    <ligand>
        <name>(2R)-3-phosphoglycerate</name>
        <dbReference type="ChEBI" id="CHEBI:58272"/>
    </ligand>
</feature>
<feature type="binding site" evidence="5">
    <location>
        <position position="170"/>
    </location>
    <ligand>
        <name>(2R)-3-phosphoglycerate</name>
        <dbReference type="ChEBI" id="CHEBI:58272"/>
    </ligand>
</feature>
<feature type="binding site" evidence="3">
    <location>
        <position position="213"/>
    </location>
    <ligand>
        <name>ADP</name>
        <dbReference type="ChEBI" id="CHEBI:456216"/>
    </ligand>
</feature>
<feature type="binding site" evidence="3">
    <location>
        <position position="213"/>
    </location>
    <ligand>
        <name>CDP</name>
        <dbReference type="ChEBI" id="CHEBI:58069"/>
    </ligand>
</feature>
<feature type="binding site" evidence="5">
    <location>
        <position position="214"/>
    </location>
    <ligand>
        <name>AMP</name>
        <dbReference type="ChEBI" id="CHEBI:456215"/>
    </ligand>
</feature>
<feature type="binding site" evidence="5">
    <location>
        <position position="214"/>
    </location>
    <ligand>
        <name>ATP</name>
        <dbReference type="ChEBI" id="CHEBI:30616"/>
    </ligand>
</feature>
<feature type="binding site" evidence="3">
    <location>
        <position position="214"/>
    </location>
    <ligand>
        <name>Mg(2+)</name>
        <dbReference type="ChEBI" id="CHEBI:18420"/>
    </ligand>
</feature>
<feature type="binding site" evidence="5">
    <location>
        <position position="215"/>
    </location>
    <ligand>
        <name>AMP</name>
        <dbReference type="ChEBI" id="CHEBI:456215"/>
    </ligand>
</feature>
<feature type="binding site" evidence="3">
    <location>
        <position position="218"/>
    </location>
    <ligand>
        <name>CDP</name>
        <dbReference type="ChEBI" id="CHEBI:58069"/>
    </ligand>
</feature>
<feature type="binding site" evidence="3">
    <location>
        <position position="218"/>
    </location>
    <ligand>
        <name>Mg(2+)</name>
        <dbReference type="ChEBI" id="CHEBI:18420"/>
    </ligand>
</feature>
<feature type="binding site" evidence="5">
    <location>
        <position position="219"/>
    </location>
    <ligand>
        <name>AMP</name>
        <dbReference type="ChEBI" id="CHEBI:456215"/>
    </ligand>
</feature>
<feature type="binding site" evidence="5">
    <location>
        <position position="219"/>
    </location>
    <ligand>
        <name>ATP</name>
        <dbReference type="ChEBI" id="CHEBI:30616"/>
    </ligand>
</feature>
<feature type="binding site" evidence="3">
    <location>
        <position position="237"/>
    </location>
    <ligand>
        <name>ADP</name>
        <dbReference type="ChEBI" id="CHEBI:456216"/>
    </ligand>
</feature>
<feature type="binding site" evidence="3">
    <location>
        <position position="237"/>
    </location>
    <ligand>
        <name>CDP</name>
        <dbReference type="ChEBI" id="CHEBI:58069"/>
    </ligand>
</feature>
<feature type="binding site" evidence="5">
    <location>
        <position position="238"/>
    </location>
    <ligand>
        <name>AMP</name>
        <dbReference type="ChEBI" id="CHEBI:456215"/>
    </ligand>
</feature>
<feature type="binding site" evidence="5">
    <location>
        <position position="238"/>
    </location>
    <ligand>
        <name>ATP</name>
        <dbReference type="ChEBI" id="CHEBI:30616"/>
    </ligand>
</feature>
<feature type="binding site" evidence="5">
    <location>
        <position position="312"/>
    </location>
    <ligand>
        <name>AMP</name>
        <dbReference type="ChEBI" id="CHEBI:456215"/>
    </ligand>
</feature>
<feature type="binding site" evidence="5">
    <location>
        <position position="312"/>
    </location>
    <ligand>
        <name>ATP</name>
        <dbReference type="ChEBI" id="CHEBI:30616"/>
    </ligand>
</feature>
<feature type="binding site" evidence="3">
    <location>
        <position position="337"/>
    </location>
    <ligand>
        <name>CDP</name>
        <dbReference type="ChEBI" id="CHEBI:58069"/>
    </ligand>
</feature>
<feature type="binding site" evidence="3">
    <location>
        <position position="342"/>
    </location>
    <ligand>
        <name>ADP</name>
        <dbReference type="ChEBI" id="CHEBI:456216"/>
    </ligand>
</feature>
<feature type="binding site" evidence="3">
    <location>
        <position position="342"/>
    </location>
    <ligand>
        <name>CDP</name>
        <dbReference type="ChEBI" id="CHEBI:58069"/>
    </ligand>
</feature>
<feature type="binding site" evidence="5">
    <location>
        <position position="343"/>
    </location>
    <ligand>
        <name>AMP</name>
        <dbReference type="ChEBI" id="CHEBI:456215"/>
    </ligand>
</feature>
<feature type="binding site" evidence="5">
    <location>
        <position position="343"/>
    </location>
    <ligand>
        <name>ATP</name>
        <dbReference type="ChEBI" id="CHEBI:30616"/>
    </ligand>
</feature>
<feature type="binding site" evidence="5">
    <location>
        <position position="374"/>
    </location>
    <ligand>
        <name>ATP</name>
        <dbReference type="ChEBI" id="CHEBI:30616"/>
    </ligand>
</feature>
<feature type="binding site" evidence="5">
    <location>
        <position position="374"/>
    </location>
    <ligand>
        <name>Mg(2+)</name>
        <dbReference type="ChEBI" id="CHEBI:18420"/>
    </ligand>
</feature>
<feature type="binding site" evidence="5">
    <location>
        <position position="375"/>
    </location>
    <ligand>
        <name>ATP</name>
        <dbReference type="ChEBI" id="CHEBI:30616"/>
    </ligand>
</feature>
<evidence type="ECO:0000250" key="1"/>
<evidence type="ECO:0000250" key="2">
    <source>
        <dbReference type="UniProtKB" id="A0A7G5KET3"/>
    </source>
</evidence>
<evidence type="ECO:0000250" key="3">
    <source>
        <dbReference type="UniProtKB" id="P00558"/>
    </source>
</evidence>
<evidence type="ECO:0000250" key="4">
    <source>
        <dbReference type="UniProtKB" id="P00560"/>
    </source>
</evidence>
<evidence type="ECO:0000250" key="5">
    <source>
        <dbReference type="UniProtKB" id="Q7SIB7"/>
    </source>
</evidence>
<evidence type="ECO:0000305" key="6"/>
<proteinExistence type="evidence at transcript level"/>
<organism>
    <name type="scientific">Agaricus bisporus</name>
    <name type="common">White button mushroom</name>
    <dbReference type="NCBI Taxonomy" id="5341"/>
    <lineage>
        <taxon>Eukaryota</taxon>
        <taxon>Fungi</taxon>
        <taxon>Dikarya</taxon>
        <taxon>Basidiomycota</taxon>
        <taxon>Agaricomycotina</taxon>
        <taxon>Agaricomycetes</taxon>
        <taxon>Agaricomycetidae</taxon>
        <taxon>Agaricales</taxon>
        <taxon>Agaricineae</taxon>
        <taxon>Agaricaceae</taxon>
        <taxon>Agaricus</taxon>
    </lineage>
</organism>